<keyword id="KW-0021">Allosteric enzyme</keyword>
<keyword id="KW-0067">ATP-binding</keyword>
<keyword id="KW-0215">Deoxyribonucleotide synthesis</keyword>
<keyword id="KW-1015">Disulfide bond</keyword>
<keyword id="KW-0547">Nucleotide-binding</keyword>
<keyword id="KW-0560">Oxidoreductase</keyword>
<keyword id="KW-1185">Reference proteome</keyword>
<feature type="chain" id="PRO_0000187206" description="Ribonucleoside-diphosphate reductase subunit alpha">
    <location>
        <begin position="1"/>
        <end position="761"/>
    </location>
</feature>
<feature type="domain" description="ATP-cone" evidence="3">
    <location>
        <begin position="5"/>
        <end position="95"/>
    </location>
</feature>
<feature type="active site" description="Proton acceptor" evidence="1">
    <location>
        <position position="437"/>
    </location>
</feature>
<feature type="active site" description="Cysteine radical intermediate" evidence="1">
    <location>
        <position position="439"/>
    </location>
</feature>
<feature type="active site" description="Proton acceptor" evidence="1">
    <location>
        <position position="441"/>
    </location>
</feature>
<feature type="binding site" evidence="2">
    <location>
        <position position="9"/>
    </location>
    <ligand>
        <name>ATP</name>
        <dbReference type="ChEBI" id="CHEBI:30616"/>
        <note>allosteric activator</note>
    </ligand>
</feature>
<feature type="binding site" evidence="2">
    <location>
        <begin position="15"/>
        <end position="21"/>
    </location>
    <ligand>
        <name>ATP</name>
        <dbReference type="ChEBI" id="CHEBI:30616"/>
        <note>allosteric activator</note>
    </ligand>
</feature>
<feature type="binding site" evidence="2">
    <location>
        <position position="55"/>
    </location>
    <ligand>
        <name>ATP</name>
        <dbReference type="ChEBI" id="CHEBI:30616"/>
        <note>allosteric activator</note>
    </ligand>
</feature>
<feature type="binding site" evidence="2">
    <location>
        <position position="91"/>
    </location>
    <ligand>
        <name>ATP</name>
        <dbReference type="ChEBI" id="CHEBI:30616"/>
        <note>allosteric activator</note>
    </ligand>
</feature>
<feature type="binding site" evidence="2">
    <location>
        <position position="209"/>
    </location>
    <ligand>
        <name>GDP</name>
        <dbReference type="ChEBI" id="CHEBI:58189"/>
    </ligand>
</feature>
<feature type="binding site" evidence="2">
    <location>
        <begin position="232"/>
        <end position="234"/>
    </location>
    <ligand>
        <name>dTTP</name>
        <dbReference type="ChEBI" id="CHEBI:37568"/>
        <note>allosteric effector that controls substrate specificity</note>
    </ligand>
</feature>
<feature type="binding site" evidence="2">
    <location>
        <position position="262"/>
    </location>
    <ligand>
        <name>dTTP</name>
        <dbReference type="ChEBI" id="CHEBI:37568"/>
        <note>allosteric effector that controls substrate specificity</note>
    </ligand>
</feature>
<feature type="binding site" evidence="2">
    <location>
        <position position="269"/>
    </location>
    <ligand>
        <name>dTTP</name>
        <dbReference type="ChEBI" id="CHEBI:37568"/>
        <note>allosteric effector that controls substrate specificity</note>
    </ligand>
</feature>
<feature type="binding site" evidence="2">
    <location>
        <position position="437"/>
    </location>
    <ligand>
        <name>GDP</name>
        <dbReference type="ChEBI" id="CHEBI:58189"/>
    </ligand>
</feature>
<feature type="binding site" evidence="2">
    <location>
        <position position="441"/>
    </location>
    <ligand>
        <name>GDP</name>
        <dbReference type="ChEBI" id="CHEBI:58189"/>
    </ligand>
</feature>
<feature type="binding site" evidence="2">
    <location>
        <begin position="623"/>
        <end position="625"/>
    </location>
    <ligand>
        <name>GDP</name>
        <dbReference type="ChEBI" id="CHEBI:58189"/>
    </ligand>
</feature>
<feature type="site" description="Important for hydrogen atom transfer" evidence="1">
    <location>
        <position position="225"/>
    </location>
</feature>
<feature type="site" description="Important for hydrogen atom transfer" evidence="1">
    <location>
        <position position="462"/>
    </location>
</feature>
<feature type="site" description="Important for electron transfer" evidence="1">
    <location>
        <position position="730"/>
    </location>
</feature>
<feature type="site" description="Important for electron transfer" evidence="1">
    <location>
        <position position="731"/>
    </location>
</feature>
<feature type="site" description="Interacts with thioredoxin/glutaredoxin" evidence="1">
    <location>
        <position position="754"/>
    </location>
</feature>
<feature type="site" description="Interacts with thioredoxin/glutaredoxin" evidence="1">
    <location>
        <position position="759"/>
    </location>
</feature>
<feature type="disulfide bond" description="Redox-active" evidence="1">
    <location>
        <begin position="225"/>
        <end position="462"/>
    </location>
</feature>
<proteinExistence type="inferred from homology"/>
<dbReference type="EC" id="1.17.4.1"/>
<dbReference type="EMBL" id="BA000003">
    <property type="protein sequence ID" value="BAB12896.1"/>
    <property type="molecule type" value="Genomic_DNA"/>
</dbReference>
<dbReference type="RefSeq" id="NP_240010.1">
    <property type="nucleotide sequence ID" value="NC_002528.1"/>
</dbReference>
<dbReference type="RefSeq" id="WP_009874136.1">
    <property type="nucleotide sequence ID" value="NZ_AP036055.1"/>
</dbReference>
<dbReference type="SMR" id="P57276"/>
<dbReference type="STRING" id="563178.BUAP5A_176"/>
<dbReference type="EnsemblBacteria" id="BAB12896">
    <property type="protein sequence ID" value="BAB12896"/>
    <property type="gene ID" value="BAB12896"/>
</dbReference>
<dbReference type="KEGG" id="buc:BU179"/>
<dbReference type="PATRIC" id="fig|107806.10.peg.190"/>
<dbReference type="eggNOG" id="COG0209">
    <property type="taxonomic scope" value="Bacteria"/>
</dbReference>
<dbReference type="HOGENOM" id="CLU_000404_3_0_6"/>
<dbReference type="Proteomes" id="UP000001806">
    <property type="component" value="Chromosome"/>
</dbReference>
<dbReference type="GO" id="GO:0005971">
    <property type="term" value="C:ribonucleoside-diphosphate reductase complex"/>
    <property type="evidence" value="ECO:0007669"/>
    <property type="project" value="TreeGrafter"/>
</dbReference>
<dbReference type="GO" id="GO:0005524">
    <property type="term" value="F:ATP binding"/>
    <property type="evidence" value="ECO:0007669"/>
    <property type="project" value="UniProtKB-KW"/>
</dbReference>
<dbReference type="GO" id="GO:0004748">
    <property type="term" value="F:ribonucleoside-diphosphate reductase activity, thioredoxin disulfide as acceptor"/>
    <property type="evidence" value="ECO:0007669"/>
    <property type="project" value="UniProtKB-EC"/>
</dbReference>
<dbReference type="GO" id="GO:0009263">
    <property type="term" value="P:deoxyribonucleotide biosynthetic process"/>
    <property type="evidence" value="ECO:0007669"/>
    <property type="project" value="UniProtKB-KW"/>
</dbReference>
<dbReference type="FunFam" id="1.10.1650.20:FF:000001">
    <property type="entry name" value="Ribonucleoside-diphosphate reductase"/>
    <property type="match status" value="1"/>
</dbReference>
<dbReference type="Gene3D" id="1.10.1650.20">
    <property type="match status" value="1"/>
</dbReference>
<dbReference type="Gene3D" id="3.20.70.20">
    <property type="match status" value="1"/>
</dbReference>
<dbReference type="InterPro" id="IPR005144">
    <property type="entry name" value="ATP-cone_dom"/>
</dbReference>
<dbReference type="InterPro" id="IPR013346">
    <property type="entry name" value="NrdE_NrdA_C"/>
</dbReference>
<dbReference type="InterPro" id="IPR000788">
    <property type="entry name" value="RNR_lg_C"/>
</dbReference>
<dbReference type="InterPro" id="IPR013509">
    <property type="entry name" value="RNR_lsu_N"/>
</dbReference>
<dbReference type="InterPro" id="IPR008926">
    <property type="entry name" value="RNR_R1-su_N"/>
</dbReference>
<dbReference type="InterPro" id="IPR039718">
    <property type="entry name" value="Rrm1"/>
</dbReference>
<dbReference type="NCBIfam" id="TIGR02506">
    <property type="entry name" value="NrdE_NrdA"/>
    <property type="match status" value="1"/>
</dbReference>
<dbReference type="NCBIfam" id="NF006578">
    <property type="entry name" value="PRK09103.1"/>
    <property type="match status" value="1"/>
</dbReference>
<dbReference type="PANTHER" id="PTHR11573">
    <property type="entry name" value="RIBONUCLEOSIDE-DIPHOSPHATE REDUCTASE LARGE CHAIN"/>
    <property type="match status" value="1"/>
</dbReference>
<dbReference type="PANTHER" id="PTHR11573:SF6">
    <property type="entry name" value="RIBONUCLEOSIDE-DIPHOSPHATE REDUCTASE LARGE SUBUNIT"/>
    <property type="match status" value="1"/>
</dbReference>
<dbReference type="Pfam" id="PF03477">
    <property type="entry name" value="ATP-cone"/>
    <property type="match status" value="1"/>
</dbReference>
<dbReference type="Pfam" id="PF02867">
    <property type="entry name" value="Ribonuc_red_lgC"/>
    <property type="match status" value="1"/>
</dbReference>
<dbReference type="Pfam" id="PF00317">
    <property type="entry name" value="Ribonuc_red_lgN"/>
    <property type="match status" value="1"/>
</dbReference>
<dbReference type="PRINTS" id="PR01183">
    <property type="entry name" value="RIBORDTASEM1"/>
</dbReference>
<dbReference type="SUPFAM" id="SSF51998">
    <property type="entry name" value="PFL-like glycyl radical enzymes"/>
    <property type="match status" value="1"/>
</dbReference>
<dbReference type="SUPFAM" id="SSF48168">
    <property type="entry name" value="R1 subunit of ribonucleotide reductase, N-terminal domain"/>
    <property type="match status" value="1"/>
</dbReference>
<dbReference type="PROSITE" id="PS51161">
    <property type="entry name" value="ATP_CONE"/>
    <property type="match status" value="1"/>
</dbReference>
<dbReference type="PROSITE" id="PS00089">
    <property type="entry name" value="RIBORED_LARGE"/>
    <property type="match status" value="1"/>
</dbReference>
<reference key="1">
    <citation type="journal article" date="2000" name="Nature">
        <title>Genome sequence of the endocellular bacterial symbiont of aphids Buchnera sp. APS.</title>
        <authorList>
            <person name="Shigenobu S."/>
            <person name="Watanabe H."/>
            <person name="Hattori M."/>
            <person name="Sakaki Y."/>
            <person name="Ishikawa H."/>
        </authorList>
    </citation>
    <scope>NUCLEOTIDE SEQUENCE [LARGE SCALE GENOMIC DNA]</scope>
    <source>
        <strain>APS</strain>
    </source>
</reference>
<accession>P57276</accession>
<name>RIR1_BUCAI</name>
<sequence length="761" mass="87166">MKKNLFVTKRDGRKEKINLDKIHKVLNWASEGLDDVSVSQVELCSRIQFYNNITTINIHETIIKAAADLISQDTPDYQYMAARLAIFHLRKKAYGQFEPPKLYDHVKKMVDLEKYDENLLKNYSYKEFLQMNSFIDHWRDMNFSYAAVKQLEGKYLIQNRVNGKIYESAQFLYILISACLFSQYPKNVRMNYIHRFYNAISTFKISLPTPIMSGVRTPTRQFSSCVLIECGDSLNSINATTSSIVKYVSQRAGIGVNAGQIRALGSPIRNGEAFHTGCIPFYKHFQSAVKSCSQGGVRGGAATIFYPIWHLEVESLLVLKNNRGIEENRVRHIDYAIQINKLMYQRMLSGDQITLFSPSDVPDLYKAFFSDQKKFKKIYLQYEKNKNIRKKTIKALDLFSLMMQERTSTGRIYVQNVDHCNLHSAFNPELSPIRQSNLCLEITLPTKSLNDVHDTDGEIALCTLSAFNLGKIKSLDDFKELSILSVRALDEILDYQNYPVLAAKKSAISRRSLGIGVINFAYYLAKNKVRYSDGSAHNLTHKTFEAMQYYLLEASCELAKEKGACSLFNHTNYYLGKLPIDTYKKYIDDICNEPLHLDWNLLRSKIKKYGLRNSTLSALMPSETSSQISNATNGIEPPRGFISIKVSKDGILRQVVPEYKKLRLQYELLWDIPNNTGYLQLAGIMQKFIDQSISVNTHYDPARFLNNKIPMKQLLYDLLLSYKLGLKTLYYQNTRDGSEDDQNITSKSITEDICESGSCIL</sequence>
<protein>
    <recommendedName>
        <fullName>Ribonucleoside-diphosphate reductase subunit alpha</fullName>
        <ecNumber>1.17.4.1</ecNumber>
    </recommendedName>
    <alternativeName>
        <fullName>Ribonucleotide reductase</fullName>
    </alternativeName>
</protein>
<organism>
    <name type="scientific">Buchnera aphidicola subsp. Acyrthosiphon pisum (strain APS)</name>
    <name type="common">Acyrthosiphon pisum symbiotic bacterium</name>
    <dbReference type="NCBI Taxonomy" id="107806"/>
    <lineage>
        <taxon>Bacteria</taxon>
        <taxon>Pseudomonadati</taxon>
        <taxon>Pseudomonadota</taxon>
        <taxon>Gammaproteobacteria</taxon>
        <taxon>Enterobacterales</taxon>
        <taxon>Erwiniaceae</taxon>
        <taxon>Buchnera</taxon>
    </lineage>
</organism>
<comment type="function">
    <text evidence="1">Provides the precursors necessary for DNA synthesis. Catalyzes the biosynthesis of deoxyribonucleotides from the corresponding ribonucleotides (By similarity).</text>
</comment>
<comment type="catalytic activity">
    <reaction>
        <text>a 2'-deoxyribonucleoside 5'-diphosphate + [thioredoxin]-disulfide + H2O = a ribonucleoside 5'-diphosphate + [thioredoxin]-dithiol</text>
        <dbReference type="Rhea" id="RHEA:23252"/>
        <dbReference type="Rhea" id="RHEA-COMP:10698"/>
        <dbReference type="Rhea" id="RHEA-COMP:10700"/>
        <dbReference type="ChEBI" id="CHEBI:15377"/>
        <dbReference type="ChEBI" id="CHEBI:29950"/>
        <dbReference type="ChEBI" id="CHEBI:50058"/>
        <dbReference type="ChEBI" id="CHEBI:57930"/>
        <dbReference type="ChEBI" id="CHEBI:73316"/>
        <dbReference type="EC" id="1.17.4.1"/>
    </reaction>
</comment>
<comment type="activity regulation">
    <text evidence="1">Under complex allosteric control mediated by deoxynucleoside triphosphates and ATP binding to separate specificity and activation sites on the alpha subunit. The type of nucleotide bound at the specificity site determines substrate preference. It seems probable that ATP makes the enzyme reduce CDP and UDP, dGTP favors ADP reduction and dTTP favors GDP reduction. Stimulated by ATP and inhibited by dATP binding to the activity site (By similarity).</text>
</comment>
<comment type="subunit">
    <text evidence="1">Tetramer of two alpha and two beta subunits.</text>
</comment>
<comment type="similarity">
    <text evidence="4">Belongs to the ribonucleoside diphosphate reductase large chain family.</text>
</comment>
<gene>
    <name type="primary">nrdA</name>
    <name type="ordered locus">BU179</name>
</gene>
<evidence type="ECO:0000250" key="1"/>
<evidence type="ECO:0000250" key="2">
    <source>
        <dbReference type="UniProtKB" id="P00452"/>
    </source>
</evidence>
<evidence type="ECO:0000255" key="3">
    <source>
        <dbReference type="PROSITE-ProRule" id="PRU00492"/>
    </source>
</evidence>
<evidence type="ECO:0000305" key="4"/>